<accession>Q5M7T4</accession>
<comment type="function">
    <text evidence="1">Involved in the maintenance of the Golgi structure.</text>
</comment>
<comment type="subunit">
    <text evidence="1">Interacts with YIPF3 and YIPF5.</text>
</comment>
<comment type="subcellular location">
    <subcellularLocation>
        <location evidence="1">Golgi apparatus</location>
        <location evidence="1">cis-Golgi network membrane</location>
        <topology>Multi-pass membrane protein</topology>
    </subcellularLocation>
</comment>
<comment type="similarity">
    <text evidence="3">Belongs to the YIP1 family.</text>
</comment>
<reference key="1">
    <citation type="journal article" date="2004" name="Genome Res.">
        <title>The status, quality, and expansion of the NIH full-length cDNA project: the Mammalian Gene Collection (MGC).</title>
        <authorList>
            <consortium name="The MGC Project Team"/>
        </authorList>
    </citation>
    <scope>NUCLEOTIDE SEQUENCE [LARGE SCALE MRNA]</scope>
    <source>
        <tissue>Kidney</tissue>
    </source>
</reference>
<gene>
    <name type="primary">Yipf4</name>
</gene>
<evidence type="ECO:0000250" key="1">
    <source>
        <dbReference type="UniProtKB" id="Q9BSR8"/>
    </source>
</evidence>
<evidence type="ECO:0000255" key="2"/>
<evidence type="ECO:0000305" key="3"/>
<name>YIPF4_RAT</name>
<keyword id="KW-0333">Golgi apparatus</keyword>
<keyword id="KW-0472">Membrane</keyword>
<keyword id="KW-1185">Reference proteome</keyword>
<keyword id="KW-0812">Transmembrane</keyword>
<keyword id="KW-1133">Transmembrane helix</keyword>
<sequence>MQPPGPPPAYAPANGDFTFVSSADAEDLSGSIAAPDVKLNLGVSGDFIKESTATTFLRQRGYGWLLEVEDEDPEDNKPLLEELDIDLKDIYYKIRCVLMPMPSLGFNRQVVRDNPDFWGPLAVVLFFSMISLYGQFRVVSWIITIWIFGSLTIFLLARVLGGEVAYGQVLGVIGYSLLPLIVIAPILLVVGSFEMVSTLIKLFGVFWAAYSAASLLVGEEFKTKKPLLIYPIFLLYIYFLSLYTGV</sequence>
<feature type="chain" id="PRO_0000242634" description="Protein YIPF4">
    <location>
        <begin position="1"/>
        <end position="246"/>
    </location>
</feature>
<feature type="topological domain" description="Cytoplasmic" evidence="1">
    <location>
        <begin position="1"/>
        <end position="115"/>
    </location>
</feature>
<feature type="transmembrane region" description="Helical" evidence="2">
    <location>
        <begin position="116"/>
        <end position="136"/>
    </location>
</feature>
<feature type="topological domain" description="Lumenal" evidence="3">
    <location>
        <begin position="137"/>
        <end position="140"/>
    </location>
</feature>
<feature type="transmembrane region" description="Helical" evidence="2">
    <location>
        <begin position="141"/>
        <end position="161"/>
    </location>
</feature>
<feature type="topological domain" description="Cytoplasmic" evidence="3">
    <location>
        <begin position="162"/>
        <end position="168"/>
    </location>
</feature>
<feature type="transmembrane region" description="Helical" evidence="2">
    <location>
        <begin position="169"/>
        <end position="189"/>
    </location>
</feature>
<feature type="topological domain" description="Lumenal" evidence="3">
    <location>
        <begin position="190"/>
        <end position="197"/>
    </location>
</feature>
<feature type="transmembrane region" description="Helical" evidence="2">
    <location>
        <begin position="198"/>
        <end position="218"/>
    </location>
</feature>
<feature type="topological domain" description="Cytoplasmic" evidence="3">
    <location>
        <begin position="219"/>
        <end position="225"/>
    </location>
</feature>
<feature type="transmembrane region" description="Helical" evidence="2">
    <location>
        <begin position="226"/>
        <end position="246"/>
    </location>
</feature>
<proteinExistence type="evidence at transcript level"/>
<dbReference type="EMBL" id="BC088468">
    <property type="protein sequence ID" value="AAH88468.1"/>
    <property type="molecule type" value="mRNA"/>
</dbReference>
<dbReference type="RefSeq" id="NP_001009712.1">
    <property type="nucleotide sequence ID" value="NM_001009712.1"/>
</dbReference>
<dbReference type="BioGRID" id="263649">
    <property type="interactions" value="1"/>
</dbReference>
<dbReference type="FunCoup" id="Q5M7T4">
    <property type="interactions" value="1880"/>
</dbReference>
<dbReference type="STRING" id="10116.ENSRNOP00000007607"/>
<dbReference type="PhosphoSitePlus" id="Q5M7T4"/>
<dbReference type="jPOST" id="Q5M7T4"/>
<dbReference type="PaxDb" id="10116-ENSRNOP00000007607"/>
<dbReference type="GeneID" id="362699"/>
<dbReference type="KEGG" id="rno:362699"/>
<dbReference type="UCSC" id="RGD:1310157">
    <property type="organism name" value="rat"/>
</dbReference>
<dbReference type="AGR" id="RGD:1310157"/>
<dbReference type="CTD" id="84272"/>
<dbReference type="RGD" id="1310157">
    <property type="gene designation" value="Yipf4"/>
</dbReference>
<dbReference type="VEuPathDB" id="HostDB:ENSRNOG00000005610"/>
<dbReference type="eggNOG" id="KOG3103">
    <property type="taxonomic scope" value="Eukaryota"/>
</dbReference>
<dbReference type="HOGENOM" id="CLU_072083_0_0_1"/>
<dbReference type="InParanoid" id="Q5M7T4"/>
<dbReference type="OrthoDB" id="77586at9989"/>
<dbReference type="PhylomeDB" id="Q5M7T4"/>
<dbReference type="PRO" id="PR:Q5M7T4"/>
<dbReference type="Proteomes" id="UP000002494">
    <property type="component" value="Chromosome 6"/>
</dbReference>
<dbReference type="Bgee" id="ENSRNOG00000005610">
    <property type="expression patterns" value="Expressed in stomach and 20 other cell types or tissues"/>
</dbReference>
<dbReference type="GO" id="GO:0016020">
    <property type="term" value="C:membrane"/>
    <property type="evidence" value="ECO:0007669"/>
    <property type="project" value="UniProtKB-KW"/>
</dbReference>
<dbReference type="GO" id="GO:0005802">
    <property type="term" value="C:trans-Golgi network"/>
    <property type="evidence" value="ECO:0000318"/>
    <property type="project" value="GO_Central"/>
</dbReference>
<dbReference type="GO" id="GO:0006888">
    <property type="term" value="P:endoplasmic reticulum to Golgi vesicle-mediated transport"/>
    <property type="evidence" value="ECO:0000318"/>
    <property type="project" value="GO_Central"/>
</dbReference>
<dbReference type="GO" id="GO:0048280">
    <property type="term" value="P:vesicle fusion with Golgi apparatus"/>
    <property type="evidence" value="ECO:0000318"/>
    <property type="project" value="GO_Central"/>
</dbReference>
<dbReference type="InterPro" id="IPR045231">
    <property type="entry name" value="Yip1/4-like"/>
</dbReference>
<dbReference type="InterPro" id="IPR006977">
    <property type="entry name" value="Yip1_dom"/>
</dbReference>
<dbReference type="PANTHER" id="PTHR21236">
    <property type="entry name" value="GOLGI MEMBRANE PROTEIN YIP1"/>
    <property type="match status" value="1"/>
</dbReference>
<dbReference type="PANTHER" id="PTHR21236:SF7">
    <property type="entry name" value="PROTEIN YIPF4"/>
    <property type="match status" value="1"/>
</dbReference>
<dbReference type="Pfam" id="PF04893">
    <property type="entry name" value="Yip1"/>
    <property type="match status" value="1"/>
</dbReference>
<organism>
    <name type="scientific">Rattus norvegicus</name>
    <name type="common">Rat</name>
    <dbReference type="NCBI Taxonomy" id="10116"/>
    <lineage>
        <taxon>Eukaryota</taxon>
        <taxon>Metazoa</taxon>
        <taxon>Chordata</taxon>
        <taxon>Craniata</taxon>
        <taxon>Vertebrata</taxon>
        <taxon>Euteleostomi</taxon>
        <taxon>Mammalia</taxon>
        <taxon>Eutheria</taxon>
        <taxon>Euarchontoglires</taxon>
        <taxon>Glires</taxon>
        <taxon>Rodentia</taxon>
        <taxon>Myomorpha</taxon>
        <taxon>Muroidea</taxon>
        <taxon>Muridae</taxon>
        <taxon>Murinae</taxon>
        <taxon>Rattus</taxon>
    </lineage>
</organism>
<protein>
    <recommendedName>
        <fullName>Protein YIPF4</fullName>
    </recommendedName>
    <alternativeName>
        <fullName>YIP1 family member 4</fullName>
    </alternativeName>
</protein>